<gene>
    <name type="ordered locus">At3g27390</name>
    <name type="ORF">K1G2.10</name>
</gene>
<organism>
    <name type="scientific">Arabidopsis thaliana</name>
    <name type="common">Mouse-ear cress</name>
    <dbReference type="NCBI Taxonomy" id="3702"/>
    <lineage>
        <taxon>Eukaryota</taxon>
        <taxon>Viridiplantae</taxon>
        <taxon>Streptophyta</taxon>
        <taxon>Embryophyta</taxon>
        <taxon>Tracheophyta</taxon>
        <taxon>Spermatophyta</taxon>
        <taxon>Magnoliopsida</taxon>
        <taxon>eudicotyledons</taxon>
        <taxon>Gunneridae</taxon>
        <taxon>Pentapetalae</taxon>
        <taxon>rosids</taxon>
        <taxon>malvids</taxon>
        <taxon>Brassicales</taxon>
        <taxon>Brassicaceae</taxon>
        <taxon>Camelineae</taxon>
        <taxon>Arabidopsis</taxon>
    </lineage>
</organism>
<sequence>MEPPIGFRASLFQFLLFLPYFIGLLFLGFIKGIVLCPLVCLVVTIGNSAVILSLLPVHIVWTFYSIVSAKQVGPILKIFLCLCLPAAIILWPIVGILGSVLGGALYGFFSPIFATFDAVGEGKPYQFFHCFYDGTWSTMQRSFTVVRDFKDVCFHSYFSLMDELKQSCPDRKYYEIRLLQLPGALVVSVLGILVDPPVISLVAICKSPYMLFKGWHRLFHDLIGREGPFLETMCVPIAGLAILLWPLAVTGAVIGSVISSIFLGAYAGVVSYQESSFYYGLCYIVASVSIYDEYSTDILDLPEGSCFPRPKYRRKDEEPTPFSGPVPRLGSVKNASSMRGGSVRVPMIDIKPLDLLNELFVECRRYGEVLATKGLINSKDIEEARSSKGSQVISVGLPAYGLLYEILRSVKANSSGLLLSDGVTEITTMNRPKDVFFDWFLNPFLILKEQMKATNLSEEEEEYLGRLVLLFGDPERLKSSNAISASPPLTERKRAELDAFARRMQGLTKTVSRYPTFRRHFVALVKKLSEDLDLKDNNSAKDESITEPPAPVKIISRIFSQRSFRRKGSVNGSDQESQKGVSRNVDIV</sequence>
<dbReference type="EMBL" id="AB024028">
    <property type="protein sequence ID" value="BAA95714.1"/>
    <property type="status" value="ALT_SEQ"/>
    <property type="molecule type" value="Genomic_DNA"/>
</dbReference>
<dbReference type="EMBL" id="CP002686">
    <property type="protein sequence ID" value="AEE77311.1"/>
    <property type="molecule type" value="Genomic_DNA"/>
</dbReference>
<dbReference type="EMBL" id="CP002686">
    <property type="protein sequence ID" value="ANM64580.1"/>
    <property type="molecule type" value="Genomic_DNA"/>
</dbReference>
<dbReference type="EMBL" id="BT002384">
    <property type="protein sequence ID" value="AAO00744.1"/>
    <property type="molecule type" value="mRNA"/>
</dbReference>
<dbReference type="RefSeq" id="NP_001326596.1">
    <property type="nucleotide sequence ID" value="NM_001338871.1"/>
</dbReference>
<dbReference type="RefSeq" id="NP_189375.2">
    <property type="nucleotide sequence ID" value="NM_113654.4"/>
</dbReference>
<dbReference type="BioGRID" id="7690">
    <property type="interactions" value="3"/>
</dbReference>
<dbReference type="FunCoup" id="Q8GUM4">
    <property type="interactions" value="2283"/>
</dbReference>
<dbReference type="STRING" id="3702.Q8GUM4"/>
<dbReference type="iPTMnet" id="Q8GUM4"/>
<dbReference type="PaxDb" id="3702-AT3G27390.1"/>
<dbReference type="ProteomicsDB" id="243150"/>
<dbReference type="EnsemblPlants" id="AT3G27390.1">
    <property type="protein sequence ID" value="AT3G27390.1"/>
    <property type="gene ID" value="AT3G27390"/>
</dbReference>
<dbReference type="EnsemblPlants" id="AT3G27390.2">
    <property type="protein sequence ID" value="AT3G27390.2"/>
    <property type="gene ID" value="AT3G27390"/>
</dbReference>
<dbReference type="GeneID" id="822360"/>
<dbReference type="Gramene" id="AT3G27390.1">
    <property type="protein sequence ID" value="AT3G27390.1"/>
    <property type="gene ID" value="AT3G27390"/>
</dbReference>
<dbReference type="Gramene" id="AT3G27390.2">
    <property type="protein sequence ID" value="AT3G27390.2"/>
    <property type="gene ID" value="AT3G27390"/>
</dbReference>
<dbReference type="KEGG" id="ath:AT3G27390"/>
<dbReference type="Araport" id="AT3G27390"/>
<dbReference type="TAIR" id="AT3G27390"/>
<dbReference type="eggNOG" id="ENOG502QTQM">
    <property type="taxonomic scope" value="Eukaryota"/>
</dbReference>
<dbReference type="HOGENOM" id="CLU_019915_1_0_1"/>
<dbReference type="InParanoid" id="Q8GUM4"/>
<dbReference type="OMA" id="PAYCIFQ"/>
<dbReference type="PRO" id="PR:Q8GUM4"/>
<dbReference type="Proteomes" id="UP000006548">
    <property type="component" value="Chromosome 3"/>
</dbReference>
<dbReference type="ExpressionAtlas" id="Q8GUM4">
    <property type="expression patterns" value="baseline and differential"/>
</dbReference>
<dbReference type="GO" id="GO:0016020">
    <property type="term" value="C:membrane"/>
    <property type="evidence" value="ECO:0007669"/>
    <property type="project" value="UniProtKB-SubCell"/>
</dbReference>
<dbReference type="InterPro" id="IPR040229">
    <property type="entry name" value="At3g27390-like"/>
</dbReference>
<dbReference type="PANTHER" id="PTHR31133:SF16">
    <property type="entry name" value="(RAPE) HYPOTHETICAL PROTEIN"/>
    <property type="match status" value="1"/>
</dbReference>
<dbReference type="PANTHER" id="PTHR31133">
    <property type="entry name" value="MEMBRANE PROTEIN"/>
    <property type="match status" value="1"/>
</dbReference>
<keyword id="KW-0472">Membrane</keyword>
<keyword id="KW-0597">Phosphoprotein</keyword>
<keyword id="KW-1185">Reference proteome</keyword>
<keyword id="KW-0812">Transmembrane</keyword>
<keyword id="KW-1133">Transmembrane helix</keyword>
<evidence type="ECO:0000255" key="1"/>
<evidence type="ECO:0000256" key="2">
    <source>
        <dbReference type="SAM" id="MobiDB-lite"/>
    </source>
</evidence>
<evidence type="ECO:0000305" key="3"/>
<evidence type="ECO:0007744" key="4">
    <source>
    </source>
</evidence>
<accession>Q8GUM4</accession>
<accession>Q9LTZ1</accession>
<proteinExistence type="evidence at protein level"/>
<protein>
    <recommendedName>
        <fullName>Uncharacterized membrane protein At3g27390</fullName>
    </recommendedName>
</protein>
<comment type="subcellular location">
    <subcellularLocation>
        <location evidence="3">Membrane</location>
        <topology evidence="3">Multi-pass membrane protein</topology>
    </subcellularLocation>
</comment>
<comment type="sequence caution" evidence="3">
    <conflict type="erroneous gene model prediction">
        <sequence resource="EMBL-CDS" id="BAA95714"/>
    </conflict>
</comment>
<reference key="1">
    <citation type="journal article" date="2000" name="DNA Res.">
        <title>Structural analysis of Arabidopsis thaliana chromosome 3. I. Sequence features of the regions of 4,504,864 bp covered by sixty P1 and TAC clones.</title>
        <authorList>
            <person name="Sato S."/>
            <person name="Nakamura Y."/>
            <person name="Kaneko T."/>
            <person name="Katoh T."/>
            <person name="Asamizu E."/>
            <person name="Tabata S."/>
        </authorList>
    </citation>
    <scope>NUCLEOTIDE SEQUENCE [LARGE SCALE GENOMIC DNA]</scope>
    <source>
        <strain>cv. Columbia</strain>
    </source>
</reference>
<reference key="2">
    <citation type="journal article" date="2017" name="Plant J.">
        <title>Araport11: a complete reannotation of the Arabidopsis thaliana reference genome.</title>
        <authorList>
            <person name="Cheng C.Y."/>
            <person name="Krishnakumar V."/>
            <person name="Chan A.P."/>
            <person name="Thibaud-Nissen F."/>
            <person name="Schobel S."/>
            <person name="Town C.D."/>
        </authorList>
    </citation>
    <scope>GENOME REANNOTATION</scope>
    <source>
        <strain>cv. Columbia</strain>
    </source>
</reference>
<reference key="3">
    <citation type="journal article" date="2003" name="Science">
        <title>Empirical analysis of transcriptional activity in the Arabidopsis genome.</title>
        <authorList>
            <person name="Yamada K."/>
            <person name="Lim J."/>
            <person name="Dale J.M."/>
            <person name="Chen H."/>
            <person name="Shinn P."/>
            <person name="Palm C.J."/>
            <person name="Southwick A.M."/>
            <person name="Wu H.C."/>
            <person name="Kim C.J."/>
            <person name="Nguyen M."/>
            <person name="Pham P.K."/>
            <person name="Cheuk R.F."/>
            <person name="Karlin-Newmann G."/>
            <person name="Liu S.X."/>
            <person name="Lam B."/>
            <person name="Sakano H."/>
            <person name="Wu T."/>
            <person name="Yu G."/>
            <person name="Miranda M."/>
            <person name="Quach H.L."/>
            <person name="Tripp M."/>
            <person name="Chang C.H."/>
            <person name="Lee J.M."/>
            <person name="Toriumi M.J."/>
            <person name="Chan M.M."/>
            <person name="Tang C.C."/>
            <person name="Onodera C.S."/>
            <person name="Deng J.M."/>
            <person name="Akiyama K."/>
            <person name="Ansari Y."/>
            <person name="Arakawa T."/>
            <person name="Banh J."/>
            <person name="Banno F."/>
            <person name="Bowser L."/>
            <person name="Brooks S.Y."/>
            <person name="Carninci P."/>
            <person name="Chao Q."/>
            <person name="Choy N."/>
            <person name="Enju A."/>
            <person name="Goldsmith A.D."/>
            <person name="Gurjal M."/>
            <person name="Hansen N.F."/>
            <person name="Hayashizaki Y."/>
            <person name="Johnson-Hopson C."/>
            <person name="Hsuan V.W."/>
            <person name="Iida K."/>
            <person name="Karnes M."/>
            <person name="Khan S."/>
            <person name="Koesema E."/>
            <person name="Ishida J."/>
            <person name="Jiang P.X."/>
            <person name="Jones T."/>
            <person name="Kawai J."/>
            <person name="Kamiya A."/>
            <person name="Meyers C."/>
            <person name="Nakajima M."/>
            <person name="Narusaka M."/>
            <person name="Seki M."/>
            <person name="Sakurai T."/>
            <person name="Satou M."/>
            <person name="Tamse R."/>
            <person name="Vaysberg M."/>
            <person name="Wallender E.K."/>
            <person name="Wong C."/>
            <person name="Yamamura Y."/>
            <person name="Yuan S."/>
            <person name="Shinozaki K."/>
            <person name="Davis R.W."/>
            <person name="Theologis A."/>
            <person name="Ecker J.R."/>
        </authorList>
    </citation>
    <scope>NUCLEOTIDE SEQUENCE [LARGE SCALE MRNA]</scope>
    <source>
        <strain>cv. Columbia</strain>
    </source>
</reference>
<reference key="4">
    <citation type="journal article" date="2009" name="Plant Physiol.">
        <title>Large-scale Arabidopsis phosphoproteome profiling reveals novel chloroplast kinase substrates and phosphorylation networks.</title>
        <authorList>
            <person name="Reiland S."/>
            <person name="Messerli G."/>
            <person name="Baerenfaller K."/>
            <person name="Gerrits B."/>
            <person name="Endler A."/>
            <person name="Grossmann J."/>
            <person name="Gruissem W."/>
            <person name="Baginsky S."/>
        </authorList>
    </citation>
    <scope>PHOSPHORYLATION [LARGE SCALE ANALYSIS] AT SER-486</scope>
    <scope>IDENTIFICATION BY MASS SPECTROMETRY [LARGE SCALE ANALYSIS]</scope>
</reference>
<feature type="chain" id="PRO_0000315409" description="Uncharacterized membrane protein At3g27390">
    <location>
        <begin position="1"/>
        <end position="588"/>
    </location>
</feature>
<feature type="transmembrane region" description="Helical" evidence="1">
    <location>
        <begin position="14"/>
        <end position="34"/>
    </location>
</feature>
<feature type="transmembrane region" description="Helical" evidence="1">
    <location>
        <begin position="49"/>
        <end position="69"/>
    </location>
</feature>
<feature type="transmembrane region" description="Helical" evidence="1">
    <location>
        <begin position="78"/>
        <end position="98"/>
    </location>
</feature>
<feature type="transmembrane region" description="Helical" evidence="1">
    <location>
        <begin position="184"/>
        <end position="204"/>
    </location>
</feature>
<feature type="transmembrane region" description="Helical" evidence="1">
    <location>
        <begin position="235"/>
        <end position="255"/>
    </location>
</feature>
<feature type="transmembrane region" description="Helical" evidence="1">
    <location>
        <begin position="257"/>
        <end position="274"/>
    </location>
</feature>
<feature type="transmembrane region" description="Helical" evidence="1">
    <location>
        <begin position="275"/>
        <end position="292"/>
    </location>
</feature>
<feature type="region of interest" description="Disordered" evidence="2">
    <location>
        <begin position="566"/>
        <end position="588"/>
    </location>
</feature>
<feature type="compositionally biased region" description="Polar residues" evidence="2">
    <location>
        <begin position="570"/>
        <end position="581"/>
    </location>
</feature>
<feature type="modified residue" description="Phosphoserine" evidence="4">
    <location>
        <position position="486"/>
    </location>
</feature>
<feature type="sequence conflict" description="In Ref. 3; AAO00744." evidence="3" ref="3">
    <original>E</original>
    <variation>K</variation>
    <location>
        <position position="462"/>
    </location>
</feature>
<name>Y3739_ARATH</name>